<comment type="function">
    <text evidence="1">Involved in the intracellular transport and egress of virions to the host cell surface with help of protein OPG056. Also participates in the formation of actin tails at the plasma membrane to allow efficient actin-based motility and thus cell to cell transmission of viral particles. Recruits host intersectin-1/ITSN1 and activates host CDC42 to drive ARP2/3-mediated actin polymerization.</text>
</comment>
<comment type="subunit">
    <text evidence="1">Interacts with host NCK. Interacts with protein OPG161 (via C-terminus). Interacts with protein OPG056. Interacts (via C-terminus) with host kinesin light chain/KLC1. Interacts with host intersectin-1/ITSN1 and EPS15.</text>
</comment>
<comment type="subcellular location">
    <subcellularLocation>
        <location evidence="1">Host cell membrane</location>
        <topology evidence="1">Single-pass membrane protein</topology>
    </subcellularLocation>
    <text evidence="1">Found exclusively on the wrapped enveloped virion. Absent in the mature virion (MV) and extracellular enveloped virion (EV).</text>
</comment>
<comment type="PTM">
    <text evidence="1">Phosphorylated on Tyr-112 and Tyr-132. Phosphorylations activate the host ARP2-ARP3 complex and lead to actin nucleation.</text>
</comment>
<comment type="similarity">
    <text evidence="3">Belongs to the orthopoxvirus OPG164 protein family.</text>
</comment>
<organism>
    <name type="scientific">Variola virus (isolate Human/India/Ind3/1967)</name>
    <name type="common">VARV</name>
    <name type="synonym">Smallpox virus</name>
    <dbReference type="NCBI Taxonomy" id="587200"/>
    <lineage>
        <taxon>Viruses</taxon>
        <taxon>Varidnaviria</taxon>
        <taxon>Bamfordvirae</taxon>
        <taxon>Nucleocytoviricota</taxon>
        <taxon>Pokkesviricetes</taxon>
        <taxon>Chitovirales</taxon>
        <taxon>Poxviridae</taxon>
        <taxon>Chordopoxvirinae</taxon>
        <taxon>Orthopoxvirus</taxon>
        <taxon>Variola virus</taxon>
    </lineage>
</organism>
<protein>
    <recommendedName>
        <fullName>Protein OPG164</fullName>
    </recommendedName>
</protein>
<accession>P33852</accession>
<proteinExistence type="inferred from homology"/>
<keyword id="KW-1032">Host cell membrane</keyword>
<keyword id="KW-1043">Host membrane</keyword>
<keyword id="KW-0945">Host-virus interaction</keyword>
<keyword id="KW-0472">Membrane</keyword>
<keyword id="KW-0597">Phosphoprotein</keyword>
<keyword id="KW-1185">Reference proteome</keyword>
<keyword id="KW-0812">Transmembrane</keyword>
<keyword id="KW-1133">Transmembrane helix</keyword>
<gene>
    <name type="primary">OPG164</name>
    <name type="ORF">A36R</name>
    <name type="ORF">A39R</name>
</gene>
<name>PG164_VAR67</name>
<evidence type="ECO:0000250" key="1">
    <source>
        <dbReference type="UniProtKB" id="P68619"/>
    </source>
</evidence>
<evidence type="ECO:0000255" key="2"/>
<evidence type="ECO:0000305" key="3"/>
<reference key="1">
    <citation type="journal article" date="1991" name="Dokl. Akad. Nauk SSSR">
        <title>Creation of a clone library of fragments from the natural variola virus and study of the structural and functional organization of viral genes from a circle of hosts.</title>
        <authorList>
            <person name="Shchelkunov S.N."/>
            <person name="Marennikova S.S."/>
            <person name="Totmenin A.V."/>
            <person name="Blinov V.M."/>
            <person name="Chizhikov V.E."/>
            <person name="Gutorov V.V."/>
            <person name="Safronov P.F."/>
            <person name="Pozdnyakov S.G."/>
            <person name="Shelukhina E.M."/>
            <person name="Gashnikov P.V."/>
            <person name="Anjaparidze O.G."/>
            <person name="Sandakhchiev L.S."/>
        </authorList>
    </citation>
    <scope>NUCLEOTIDE SEQUENCE [GENOMIC DNA]</scope>
    <source>
        <strain>India-1967 / Isolate Ind3</strain>
    </source>
</reference>
<reference key="2">
    <citation type="journal article" date="1993" name="FEBS Lett.">
        <title>Genes of variola and vaccinia viruses necessary to overcome the host protective mechanisms.</title>
        <authorList>
            <person name="Shchelkunov S.N."/>
            <person name="Blinov V.M."/>
            <person name="Sandakhchiev L.S."/>
        </authorList>
    </citation>
    <scope>NUCLEOTIDE SEQUENCE [GENOMIC DNA]</scope>
    <source>
        <strain>India-1967 / Isolate Ind3</strain>
    </source>
</reference>
<reference key="3">
    <citation type="journal article" date="1992" name="J. Gen. Virol.">
        <title>Nucleotide sequence of 21.8 kbp of variola major virus strain Harvey and comparison with vaccinia virus.</title>
        <authorList>
            <person name="Aguado B."/>
            <person name="Selmes I.P."/>
            <person name="Smith G.L."/>
        </authorList>
    </citation>
    <scope>NUCLEOTIDE SEQUENCE [GENOMIC DNA]</scope>
    <source>
        <strain>Harvey</strain>
    </source>
</reference>
<reference key="4">
    <citation type="submission" date="1995-12" db="EMBL/GenBank/DDBJ databases">
        <authorList>
            <person name="Shchelkunov S.N."/>
            <person name="Totmenin A.V."/>
            <person name="Resenchuk S.M."/>
            <person name="Blinov V.M."/>
            <person name="Sandakhchiev L.S."/>
        </authorList>
    </citation>
    <scope>NUCLEOTIDE SEQUENCE [GENOMIC DNA]</scope>
    <source>
        <strain>Garcia-1966</strain>
    </source>
</reference>
<organismHost>
    <name type="scientific">Homo sapiens</name>
    <name type="common">Human</name>
    <dbReference type="NCBI Taxonomy" id="9606"/>
</organismHost>
<feature type="chain" id="PRO_0000040601" description="Protein OPG164">
    <location>
        <begin position="1"/>
        <end position="216"/>
    </location>
</feature>
<feature type="topological domain" description="Extracellular">
    <location>
        <position position="1"/>
    </location>
</feature>
<feature type="transmembrane region" description="Helical" evidence="2">
    <location>
        <begin position="2"/>
        <end position="22"/>
    </location>
</feature>
<feature type="topological domain" description="Cytoplasmic">
    <location>
        <begin position="23"/>
        <end position="216"/>
    </location>
</feature>
<feature type="short sequence motif" description="NPF-motif" evidence="1">
    <location>
        <begin position="160"/>
        <end position="162"/>
    </location>
</feature>
<feature type="short sequence motif" description="NPF-motif" evidence="1">
    <location>
        <begin position="175"/>
        <end position="177"/>
    </location>
</feature>
<feature type="short sequence motif" description="NPF-motif" evidence="1">
    <location>
        <begin position="189"/>
        <end position="191"/>
    </location>
</feature>
<feature type="modified residue" description="Phosphotyrosine; by host" evidence="1">
    <location>
        <position position="112"/>
    </location>
</feature>
<feature type="modified residue" description="Phosphotyrosine; by host" evidence="1">
    <location>
        <position position="132"/>
    </location>
</feature>
<sequence>MILVPLITVTVVAGTILVCYILYICRKKIRTVYNDNKIIMTKLKKIKSSNSSKSSKSTDNESDWEDHCSAMEQNNDVDNISRNEILDDDSFAGSLIWDNESNVIAPSTEHIYDSVAGSTRLINNDCNEQTIYQNTTVINETETIEVLNEDTKQNPSYSSNPFVNYNKTSICSKSNPFITELNNKFSENNPFRRAHSDDYLNKQEHDDIESSVVSLV</sequence>
<dbReference type="EMBL" id="X69198">
    <property type="protein sequence ID" value="CAA49084.1"/>
    <property type="molecule type" value="Genomic_DNA"/>
</dbReference>
<dbReference type="EMBL" id="X67115">
    <property type="protein sequence ID" value="CAA47510.1"/>
    <property type="molecule type" value="Genomic_DNA"/>
</dbReference>
<dbReference type="EMBL" id="X76266">
    <property type="protein sequence ID" value="CAA53865.1"/>
    <property type="molecule type" value="Genomic_DNA"/>
</dbReference>
<dbReference type="PIR" id="D36852">
    <property type="entry name" value="D36852"/>
</dbReference>
<dbReference type="PIR" id="E72168">
    <property type="entry name" value="E72168"/>
</dbReference>
<dbReference type="RefSeq" id="NP_042187.1">
    <property type="nucleotide sequence ID" value="NC_001611.1"/>
</dbReference>
<dbReference type="GeneID" id="1486517"/>
<dbReference type="KEGG" id="vg:1486517"/>
<dbReference type="Proteomes" id="UP000002060">
    <property type="component" value="Segment"/>
</dbReference>
<dbReference type="GO" id="GO:0020002">
    <property type="term" value="C:host cell plasma membrane"/>
    <property type="evidence" value="ECO:0007669"/>
    <property type="project" value="UniProtKB-SubCell"/>
</dbReference>
<dbReference type="GO" id="GO:0016020">
    <property type="term" value="C:membrane"/>
    <property type="evidence" value="ECO:0007669"/>
    <property type="project" value="UniProtKB-KW"/>
</dbReference>
<dbReference type="InterPro" id="IPR010274">
    <property type="entry name" value="Orthopox_A36R"/>
</dbReference>
<dbReference type="Pfam" id="PF05950">
    <property type="entry name" value="Orthopox_A36R"/>
    <property type="match status" value="1"/>
</dbReference>